<comment type="function">
    <text evidence="1">Catalyzes a mechanistically unusual reaction, the ATP-dependent insertion of CO2 between the N7 and N8 nitrogen atoms of 7,8-diaminopelargonic acid (DAPA, also called 7,8-diammoniononanoate) to form a ureido ring.</text>
</comment>
<comment type="catalytic activity">
    <reaction evidence="1">
        <text>(7R,8S)-7,8-diammoniononanoate + CO2 + ATP = (4R,5S)-dethiobiotin + ADP + phosphate + 3 H(+)</text>
        <dbReference type="Rhea" id="RHEA:15805"/>
        <dbReference type="ChEBI" id="CHEBI:15378"/>
        <dbReference type="ChEBI" id="CHEBI:16526"/>
        <dbReference type="ChEBI" id="CHEBI:30616"/>
        <dbReference type="ChEBI" id="CHEBI:43474"/>
        <dbReference type="ChEBI" id="CHEBI:149469"/>
        <dbReference type="ChEBI" id="CHEBI:149473"/>
        <dbReference type="ChEBI" id="CHEBI:456216"/>
        <dbReference type="EC" id="6.3.3.3"/>
    </reaction>
</comment>
<comment type="cofactor">
    <cofactor evidence="1">
        <name>Mg(2+)</name>
        <dbReference type="ChEBI" id="CHEBI:18420"/>
    </cofactor>
</comment>
<comment type="pathway">
    <text evidence="1">Cofactor biosynthesis; biotin biosynthesis; biotin from 7,8-diaminononanoate: step 1/2.</text>
</comment>
<comment type="subunit">
    <text evidence="1">Homodimer.</text>
</comment>
<comment type="subcellular location">
    <subcellularLocation>
        <location evidence="1">Cytoplasm</location>
    </subcellularLocation>
</comment>
<comment type="similarity">
    <text evidence="1">Belongs to the dethiobiotin synthetase family.</text>
</comment>
<reference key="1">
    <citation type="submission" date="2007-06" db="EMBL/GenBank/DDBJ databases">
        <authorList>
            <person name="Dodson R.J."/>
            <person name="Harkins D."/>
            <person name="Paulsen I.T."/>
        </authorList>
    </citation>
    <scope>NUCLEOTIDE SEQUENCE [LARGE SCALE GENOMIC DNA]</scope>
    <source>
        <strain>DSM 24068 / PA7</strain>
    </source>
</reference>
<name>BIOD_PSEP7</name>
<protein>
    <recommendedName>
        <fullName evidence="1">ATP-dependent dethiobiotin synthetase BioD</fullName>
        <ecNumber evidence="1">6.3.3.3</ecNumber>
    </recommendedName>
    <alternativeName>
        <fullName evidence="1">DTB synthetase</fullName>
        <shortName evidence="1">DTBS</shortName>
    </alternativeName>
    <alternativeName>
        <fullName evidence="1">Dethiobiotin synthase</fullName>
    </alternativeName>
</protein>
<evidence type="ECO:0000255" key="1">
    <source>
        <dbReference type="HAMAP-Rule" id="MF_00336"/>
    </source>
</evidence>
<sequence length="228" mass="23255">MPAFFVTGTDTEIGKTTIAAGLLHAARSAGLSTAAAKPVASGCEATAQGLRNGDALALLGECSLALAYEQVNPLAFEPAIAPHLAAREAGVELSAARLHDAVREVLALRADFTLVEGAGGWRVPLQGRENLSDLARLLGLPVVLVVGVRLGCINHALLSAEAILGDGLALAGWVANIVDPATSRLEENLATLAERLPAPCLGRVPRLADAGPAAVAAHLDLRPLGIGL</sequence>
<accession>A6UYW4</accession>
<proteinExistence type="inferred from homology"/>
<gene>
    <name evidence="1" type="primary">bioD</name>
    <name type="ordered locus">PSPA7_0604</name>
</gene>
<dbReference type="EC" id="6.3.3.3" evidence="1"/>
<dbReference type="EMBL" id="CP000744">
    <property type="protein sequence ID" value="ABR83056.1"/>
    <property type="molecule type" value="Genomic_DNA"/>
</dbReference>
<dbReference type="RefSeq" id="WP_012074073.1">
    <property type="nucleotide sequence ID" value="NC_009656.1"/>
</dbReference>
<dbReference type="SMR" id="A6UYW4"/>
<dbReference type="GeneID" id="77219025"/>
<dbReference type="KEGG" id="pap:PSPA7_0604"/>
<dbReference type="HOGENOM" id="CLU_072551_0_0_6"/>
<dbReference type="UniPathway" id="UPA00078">
    <property type="reaction ID" value="UER00161"/>
</dbReference>
<dbReference type="Proteomes" id="UP000001582">
    <property type="component" value="Chromosome"/>
</dbReference>
<dbReference type="GO" id="GO:0005829">
    <property type="term" value="C:cytosol"/>
    <property type="evidence" value="ECO:0007669"/>
    <property type="project" value="TreeGrafter"/>
</dbReference>
<dbReference type="GO" id="GO:0005524">
    <property type="term" value="F:ATP binding"/>
    <property type="evidence" value="ECO:0007669"/>
    <property type="project" value="UniProtKB-UniRule"/>
</dbReference>
<dbReference type="GO" id="GO:0004141">
    <property type="term" value="F:dethiobiotin synthase activity"/>
    <property type="evidence" value="ECO:0007669"/>
    <property type="project" value="UniProtKB-UniRule"/>
</dbReference>
<dbReference type="GO" id="GO:0000287">
    <property type="term" value="F:magnesium ion binding"/>
    <property type="evidence" value="ECO:0007669"/>
    <property type="project" value="UniProtKB-UniRule"/>
</dbReference>
<dbReference type="GO" id="GO:0009102">
    <property type="term" value="P:biotin biosynthetic process"/>
    <property type="evidence" value="ECO:0007669"/>
    <property type="project" value="UniProtKB-UniRule"/>
</dbReference>
<dbReference type="CDD" id="cd03109">
    <property type="entry name" value="DTBS"/>
    <property type="match status" value="1"/>
</dbReference>
<dbReference type="FunFam" id="3.40.50.300:FF:000292">
    <property type="entry name" value="ATP-dependent dethiobiotin synthetase BioD"/>
    <property type="match status" value="1"/>
</dbReference>
<dbReference type="Gene3D" id="3.40.50.300">
    <property type="entry name" value="P-loop containing nucleotide triphosphate hydrolases"/>
    <property type="match status" value="1"/>
</dbReference>
<dbReference type="HAMAP" id="MF_00336">
    <property type="entry name" value="BioD"/>
    <property type="match status" value="1"/>
</dbReference>
<dbReference type="InterPro" id="IPR004472">
    <property type="entry name" value="DTB_synth_BioD"/>
</dbReference>
<dbReference type="InterPro" id="IPR027417">
    <property type="entry name" value="P-loop_NTPase"/>
</dbReference>
<dbReference type="NCBIfam" id="TIGR00347">
    <property type="entry name" value="bioD"/>
    <property type="match status" value="1"/>
</dbReference>
<dbReference type="PANTHER" id="PTHR43210">
    <property type="entry name" value="DETHIOBIOTIN SYNTHETASE"/>
    <property type="match status" value="1"/>
</dbReference>
<dbReference type="PANTHER" id="PTHR43210:SF5">
    <property type="entry name" value="DETHIOBIOTIN SYNTHETASE"/>
    <property type="match status" value="1"/>
</dbReference>
<dbReference type="Pfam" id="PF13500">
    <property type="entry name" value="AAA_26"/>
    <property type="match status" value="1"/>
</dbReference>
<dbReference type="PIRSF" id="PIRSF006755">
    <property type="entry name" value="DTB_synth"/>
    <property type="match status" value="1"/>
</dbReference>
<dbReference type="SUPFAM" id="SSF52540">
    <property type="entry name" value="P-loop containing nucleoside triphosphate hydrolases"/>
    <property type="match status" value="1"/>
</dbReference>
<feature type="chain" id="PRO_1000019566" description="ATP-dependent dethiobiotin synthetase BioD">
    <location>
        <begin position="1"/>
        <end position="228"/>
    </location>
</feature>
<feature type="active site" evidence="1">
    <location>
        <position position="37"/>
    </location>
</feature>
<feature type="binding site" evidence="1">
    <location>
        <begin position="12"/>
        <end position="17"/>
    </location>
    <ligand>
        <name>ATP</name>
        <dbReference type="ChEBI" id="CHEBI:30616"/>
    </ligand>
</feature>
<feature type="binding site" evidence="1">
    <location>
        <position position="16"/>
    </location>
    <ligand>
        <name>Mg(2+)</name>
        <dbReference type="ChEBI" id="CHEBI:18420"/>
    </ligand>
</feature>
<feature type="binding site" evidence="1">
    <location>
        <position position="41"/>
    </location>
    <ligand>
        <name>substrate</name>
    </ligand>
</feature>
<feature type="binding site" evidence="1">
    <location>
        <position position="54"/>
    </location>
    <ligand>
        <name>ATP</name>
        <dbReference type="ChEBI" id="CHEBI:30616"/>
    </ligand>
</feature>
<feature type="binding site" evidence="1">
    <location>
        <position position="54"/>
    </location>
    <ligand>
        <name>Mg(2+)</name>
        <dbReference type="ChEBI" id="CHEBI:18420"/>
    </ligand>
</feature>
<feature type="binding site" evidence="1">
    <location>
        <begin position="116"/>
        <end position="119"/>
    </location>
    <ligand>
        <name>ATP</name>
        <dbReference type="ChEBI" id="CHEBI:30616"/>
    </ligand>
</feature>
<feature type="binding site" evidence="1">
    <location>
        <position position="116"/>
    </location>
    <ligand>
        <name>Mg(2+)</name>
        <dbReference type="ChEBI" id="CHEBI:18420"/>
    </ligand>
</feature>
<feature type="binding site" evidence="1">
    <location>
        <begin position="205"/>
        <end position="207"/>
    </location>
    <ligand>
        <name>ATP</name>
        <dbReference type="ChEBI" id="CHEBI:30616"/>
    </ligand>
</feature>
<keyword id="KW-0067">ATP-binding</keyword>
<keyword id="KW-0093">Biotin biosynthesis</keyword>
<keyword id="KW-0963">Cytoplasm</keyword>
<keyword id="KW-0436">Ligase</keyword>
<keyword id="KW-0460">Magnesium</keyword>
<keyword id="KW-0479">Metal-binding</keyword>
<keyword id="KW-0547">Nucleotide-binding</keyword>
<organism>
    <name type="scientific">Pseudomonas paraeruginosa (strain DSM 24068 / PA7)</name>
    <name type="common">Pseudomonas aeruginosa (strain PA7)</name>
    <dbReference type="NCBI Taxonomy" id="381754"/>
    <lineage>
        <taxon>Bacteria</taxon>
        <taxon>Pseudomonadati</taxon>
        <taxon>Pseudomonadota</taxon>
        <taxon>Gammaproteobacteria</taxon>
        <taxon>Pseudomonadales</taxon>
        <taxon>Pseudomonadaceae</taxon>
        <taxon>Pseudomonas</taxon>
        <taxon>Pseudomonas paraeruginosa</taxon>
    </lineage>
</organism>